<proteinExistence type="inferred from homology"/>
<organism>
    <name type="scientific">Halorubrum lacusprofundi (strain ATCC 49239 / DSM 5036 / JCM 8891 / ACAM 34)</name>
    <dbReference type="NCBI Taxonomy" id="416348"/>
    <lineage>
        <taxon>Archaea</taxon>
        <taxon>Methanobacteriati</taxon>
        <taxon>Methanobacteriota</taxon>
        <taxon>Stenosarchaea group</taxon>
        <taxon>Halobacteria</taxon>
        <taxon>Halobacteriales</taxon>
        <taxon>Haloferacaceae</taxon>
        <taxon>Halorubrum</taxon>
    </lineage>
</organism>
<accession>B9LQK2</accession>
<name>RL37_HALLT</name>
<gene>
    <name evidence="1" type="primary">rpl37e</name>
    <name type="ordered locus">Hlac_2045</name>
</gene>
<protein>
    <recommendedName>
        <fullName evidence="1">Large ribosomal subunit protein eL37</fullName>
    </recommendedName>
    <alternativeName>
        <fullName evidence="3">50S ribosomal protein L37e</fullName>
    </alternativeName>
</protein>
<evidence type="ECO:0000255" key="1">
    <source>
        <dbReference type="HAMAP-Rule" id="MF_00547"/>
    </source>
</evidence>
<evidence type="ECO:0000256" key="2">
    <source>
        <dbReference type="SAM" id="MobiDB-lite"/>
    </source>
</evidence>
<evidence type="ECO:0000305" key="3"/>
<reference key="1">
    <citation type="journal article" date="2016" name="Stand. Genomic Sci.">
        <title>Complete genome sequence of the Antarctic Halorubrum lacusprofundi type strain ACAM 34.</title>
        <authorList>
            <person name="Anderson I.J."/>
            <person name="DasSarma P."/>
            <person name="Lucas S."/>
            <person name="Copeland A."/>
            <person name="Lapidus A."/>
            <person name="Del Rio T.G."/>
            <person name="Tice H."/>
            <person name="Dalin E."/>
            <person name="Bruce D.C."/>
            <person name="Goodwin L."/>
            <person name="Pitluck S."/>
            <person name="Sims D."/>
            <person name="Brettin T.S."/>
            <person name="Detter J.C."/>
            <person name="Han C.S."/>
            <person name="Larimer F."/>
            <person name="Hauser L."/>
            <person name="Land M."/>
            <person name="Ivanova N."/>
            <person name="Richardson P."/>
            <person name="Cavicchioli R."/>
            <person name="DasSarma S."/>
            <person name="Woese C.R."/>
            <person name="Kyrpides N.C."/>
        </authorList>
    </citation>
    <scope>NUCLEOTIDE SEQUENCE [LARGE SCALE GENOMIC DNA]</scope>
    <source>
        <strain>ATCC 49239 / DSM 5036 / JCM 8891 / ACAM 34</strain>
    </source>
</reference>
<comment type="function">
    <text evidence="1">Binds to the 23S rRNA.</text>
</comment>
<comment type="cofactor">
    <cofactor evidence="1">
        <name>Zn(2+)</name>
        <dbReference type="ChEBI" id="CHEBI:29105"/>
    </cofactor>
    <text evidence="1">Binds 1 zinc ion per subunit.</text>
</comment>
<comment type="similarity">
    <text evidence="1">Belongs to the eukaryotic ribosomal protein eL37 family.</text>
</comment>
<keyword id="KW-0479">Metal-binding</keyword>
<keyword id="KW-1185">Reference proteome</keyword>
<keyword id="KW-0687">Ribonucleoprotein</keyword>
<keyword id="KW-0689">Ribosomal protein</keyword>
<keyword id="KW-0694">RNA-binding</keyword>
<keyword id="KW-0699">rRNA-binding</keyword>
<keyword id="KW-0862">Zinc</keyword>
<keyword id="KW-0863">Zinc-finger</keyword>
<sequence length="58" mass="6355">MTGSGTPSQGKKNKTVHVKCRRCGEKSYHVKKERCSSCGFGDSASRRGYAWQSKSGDN</sequence>
<dbReference type="EMBL" id="CP001365">
    <property type="protein sequence ID" value="ACM57623.1"/>
    <property type="molecule type" value="Genomic_DNA"/>
</dbReference>
<dbReference type="RefSeq" id="WP_015910748.1">
    <property type="nucleotide sequence ID" value="NC_012029.1"/>
</dbReference>
<dbReference type="SMR" id="B9LQK2"/>
<dbReference type="GeneID" id="7402064"/>
<dbReference type="KEGG" id="hla:Hlac_2045"/>
<dbReference type="eggNOG" id="arCOG04126">
    <property type="taxonomic scope" value="Archaea"/>
</dbReference>
<dbReference type="HOGENOM" id="CLU_208825_0_0_2"/>
<dbReference type="Proteomes" id="UP000000740">
    <property type="component" value="Chromosome 1"/>
</dbReference>
<dbReference type="GO" id="GO:1990904">
    <property type="term" value="C:ribonucleoprotein complex"/>
    <property type="evidence" value="ECO:0007669"/>
    <property type="project" value="UniProtKB-KW"/>
</dbReference>
<dbReference type="GO" id="GO:0005840">
    <property type="term" value="C:ribosome"/>
    <property type="evidence" value="ECO:0007669"/>
    <property type="project" value="UniProtKB-KW"/>
</dbReference>
<dbReference type="GO" id="GO:0019843">
    <property type="term" value="F:rRNA binding"/>
    <property type="evidence" value="ECO:0007669"/>
    <property type="project" value="UniProtKB-KW"/>
</dbReference>
<dbReference type="GO" id="GO:0003735">
    <property type="term" value="F:structural constituent of ribosome"/>
    <property type="evidence" value="ECO:0007669"/>
    <property type="project" value="InterPro"/>
</dbReference>
<dbReference type="GO" id="GO:0008270">
    <property type="term" value="F:zinc ion binding"/>
    <property type="evidence" value="ECO:0007669"/>
    <property type="project" value="UniProtKB-UniRule"/>
</dbReference>
<dbReference type="GO" id="GO:0006412">
    <property type="term" value="P:translation"/>
    <property type="evidence" value="ECO:0007669"/>
    <property type="project" value="UniProtKB-UniRule"/>
</dbReference>
<dbReference type="FunFam" id="2.20.25.30:FF:000003">
    <property type="entry name" value="50S ribosomal protein L37e"/>
    <property type="match status" value="1"/>
</dbReference>
<dbReference type="Gene3D" id="2.20.25.30">
    <property type="match status" value="1"/>
</dbReference>
<dbReference type="HAMAP" id="MF_00547">
    <property type="entry name" value="Ribosomal_eL37"/>
    <property type="match status" value="1"/>
</dbReference>
<dbReference type="InterPro" id="IPR001569">
    <property type="entry name" value="Ribosomal_eL37"/>
</dbReference>
<dbReference type="InterPro" id="IPR011331">
    <property type="entry name" value="Ribosomal_eL37/eL43"/>
</dbReference>
<dbReference type="InterPro" id="IPR018267">
    <property type="entry name" value="Ribosomal_eL37_CS"/>
</dbReference>
<dbReference type="InterPro" id="IPR011332">
    <property type="entry name" value="Ribosomal_zn-bd"/>
</dbReference>
<dbReference type="NCBIfam" id="NF003214">
    <property type="entry name" value="PRK04179.1"/>
    <property type="match status" value="1"/>
</dbReference>
<dbReference type="Pfam" id="PF01907">
    <property type="entry name" value="Ribosomal_L37e"/>
    <property type="match status" value="1"/>
</dbReference>
<dbReference type="SUPFAM" id="SSF57829">
    <property type="entry name" value="Zn-binding ribosomal proteins"/>
    <property type="match status" value="1"/>
</dbReference>
<dbReference type="PROSITE" id="PS01077">
    <property type="entry name" value="RIBOSOMAL_L37E"/>
    <property type="match status" value="1"/>
</dbReference>
<feature type="chain" id="PRO_1000146606" description="Large ribosomal subunit protein eL37">
    <location>
        <begin position="1"/>
        <end position="58"/>
    </location>
</feature>
<feature type="zinc finger region" description="C4-type" evidence="1">
    <location>
        <begin position="20"/>
        <end position="38"/>
    </location>
</feature>
<feature type="region of interest" description="Disordered" evidence="2">
    <location>
        <begin position="39"/>
        <end position="58"/>
    </location>
</feature>
<feature type="binding site" evidence="1">
    <location>
        <position position="20"/>
    </location>
    <ligand>
        <name>Zn(2+)</name>
        <dbReference type="ChEBI" id="CHEBI:29105"/>
    </ligand>
</feature>
<feature type="binding site" evidence="1">
    <location>
        <position position="23"/>
    </location>
    <ligand>
        <name>Zn(2+)</name>
        <dbReference type="ChEBI" id="CHEBI:29105"/>
    </ligand>
</feature>
<feature type="binding site" evidence="1">
    <location>
        <position position="35"/>
    </location>
    <ligand>
        <name>Zn(2+)</name>
        <dbReference type="ChEBI" id="CHEBI:29105"/>
    </ligand>
</feature>
<feature type="binding site" evidence="1">
    <location>
        <position position="38"/>
    </location>
    <ligand>
        <name>Zn(2+)</name>
        <dbReference type="ChEBI" id="CHEBI:29105"/>
    </ligand>
</feature>